<keyword id="KW-0217">Developmental protein</keyword>
<keyword id="KW-0238">DNA-binding</keyword>
<keyword id="KW-0371">Homeobox</keyword>
<keyword id="KW-0539">Nucleus</keyword>
<keyword id="KW-1185">Reference proteome</keyword>
<keyword id="KW-0804">Transcription</keyword>
<keyword id="KW-0805">Transcription regulation</keyword>
<sequence>MAMSSYMVNSKYVDPKFPPCEEYSQNNYIPEQGSDYYSSSQDTDFQHPGIYPRSNYTEQPFGCTAVQEPTVPRGHVHDKSGQPSPFNAQTESGAPVLVAGPRTCGQQQNTKSQNGTQAKQPAVVYPWMKKVHVTTVNPDYTGSEPKRSRTAYTRQQVLELEKEFHFNRYLTRRRRIEIAHTLCLSERQIKIWFQNRRMKWTKDHKLPNTKGRSAPASSHLQSIHKDQTDITSL</sequence>
<feature type="chain" id="PRO_0000265995" description="Homeobox protein Hox-D4a">
    <location>
        <begin position="1"/>
        <end position="233"/>
    </location>
</feature>
<feature type="DNA-binding region" description="Homeobox" evidence="2">
    <location>
        <begin position="145"/>
        <end position="204"/>
    </location>
</feature>
<feature type="region of interest" description="Disordered" evidence="3">
    <location>
        <begin position="203"/>
        <end position="233"/>
    </location>
</feature>
<feature type="short sequence motif" description="Antp-type hexapeptide">
    <location>
        <begin position="124"/>
        <end position="129"/>
    </location>
</feature>
<feature type="compositionally biased region" description="Basic and acidic residues" evidence="3">
    <location>
        <begin position="223"/>
        <end position="233"/>
    </location>
</feature>
<gene>
    <name type="primary">hoxd4a</name>
</gene>
<name>HXD4A_TAKRU</name>
<dbReference type="EMBL" id="DQ481668">
    <property type="protein sequence ID" value="ABF22466.1"/>
    <property type="molecule type" value="Genomic_DNA"/>
</dbReference>
<dbReference type="SMR" id="Q1KKS8"/>
<dbReference type="FunCoup" id="Q1KKS8">
    <property type="interactions" value="444"/>
</dbReference>
<dbReference type="STRING" id="31033.ENSTRUP00000049251"/>
<dbReference type="eggNOG" id="KOG0487">
    <property type="taxonomic scope" value="Eukaryota"/>
</dbReference>
<dbReference type="eggNOG" id="KOG0489">
    <property type="taxonomic scope" value="Eukaryota"/>
</dbReference>
<dbReference type="InParanoid" id="Q1KKS8"/>
<dbReference type="Proteomes" id="UP000005226">
    <property type="component" value="Unplaced"/>
</dbReference>
<dbReference type="GO" id="GO:0005654">
    <property type="term" value="C:nucleoplasm"/>
    <property type="evidence" value="ECO:0007669"/>
    <property type="project" value="TreeGrafter"/>
</dbReference>
<dbReference type="GO" id="GO:0000981">
    <property type="term" value="F:DNA-binding transcription factor activity, RNA polymerase II-specific"/>
    <property type="evidence" value="ECO:0007669"/>
    <property type="project" value="TreeGrafter"/>
</dbReference>
<dbReference type="GO" id="GO:0000978">
    <property type="term" value="F:RNA polymerase II cis-regulatory region sequence-specific DNA binding"/>
    <property type="evidence" value="ECO:0007669"/>
    <property type="project" value="TreeGrafter"/>
</dbReference>
<dbReference type="GO" id="GO:0009952">
    <property type="term" value="P:anterior/posterior pattern specification"/>
    <property type="evidence" value="ECO:0007669"/>
    <property type="project" value="TreeGrafter"/>
</dbReference>
<dbReference type="GO" id="GO:0048704">
    <property type="term" value="P:embryonic skeletal system morphogenesis"/>
    <property type="evidence" value="ECO:0007669"/>
    <property type="project" value="TreeGrafter"/>
</dbReference>
<dbReference type="GO" id="GO:0045944">
    <property type="term" value="P:positive regulation of transcription by RNA polymerase II"/>
    <property type="evidence" value="ECO:0007669"/>
    <property type="project" value="TreeGrafter"/>
</dbReference>
<dbReference type="CDD" id="cd00086">
    <property type="entry name" value="homeodomain"/>
    <property type="match status" value="1"/>
</dbReference>
<dbReference type="FunFam" id="1.10.10.60:FF:000029">
    <property type="entry name" value="Homeobox protein Hox-D4"/>
    <property type="match status" value="1"/>
</dbReference>
<dbReference type="Gene3D" id="1.10.10.60">
    <property type="entry name" value="Homeodomain-like"/>
    <property type="match status" value="1"/>
</dbReference>
<dbReference type="InterPro" id="IPR050609">
    <property type="entry name" value="Antp_homeobox_Deformed_sf"/>
</dbReference>
<dbReference type="InterPro" id="IPR001356">
    <property type="entry name" value="HD"/>
</dbReference>
<dbReference type="InterPro" id="IPR020479">
    <property type="entry name" value="HD_metazoa"/>
</dbReference>
<dbReference type="InterPro" id="IPR017995">
    <property type="entry name" value="Homeobox_antennapedia"/>
</dbReference>
<dbReference type="InterPro" id="IPR001827">
    <property type="entry name" value="Homeobox_Antennapedia_CS"/>
</dbReference>
<dbReference type="InterPro" id="IPR009057">
    <property type="entry name" value="Homeodomain-like_sf"/>
</dbReference>
<dbReference type="PANTHER" id="PTHR45771:SF5">
    <property type="entry name" value="HOMEOBOX PROTEIN HOX-D4"/>
    <property type="match status" value="1"/>
</dbReference>
<dbReference type="PANTHER" id="PTHR45771">
    <property type="entry name" value="HOMEOTIC PROTEIN DEFORMED"/>
    <property type="match status" value="1"/>
</dbReference>
<dbReference type="Pfam" id="PF00046">
    <property type="entry name" value="Homeodomain"/>
    <property type="match status" value="1"/>
</dbReference>
<dbReference type="PRINTS" id="PR00025">
    <property type="entry name" value="ANTENNAPEDIA"/>
</dbReference>
<dbReference type="PRINTS" id="PR00024">
    <property type="entry name" value="HOMEOBOX"/>
</dbReference>
<dbReference type="SMART" id="SM00389">
    <property type="entry name" value="HOX"/>
    <property type="match status" value="1"/>
</dbReference>
<dbReference type="SUPFAM" id="SSF46689">
    <property type="entry name" value="Homeodomain-like"/>
    <property type="match status" value="1"/>
</dbReference>
<dbReference type="PROSITE" id="PS00032">
    <property type="entry name" value="ANTENNAPEDIA"/>
    <property type="match status" value="1"/>
</dbReference>
<dbReference type="PROSITE" id="PS50071">
    <property type="entry name" value="HOMEOBOX_2"/>
    <property type="match status" value="1"/>
</dbReference>
<evidence type="ECO:0000250" key="1"/>
<evidence type="ECO:0000255" key="2">
    <source>
        <dbReference type="PROSITE-ProRule" id="PRU00108"/>
    </source>
</evidence>
<evidence type="ECO:0000256" key="3">
    <source>
        <dbReference type="SAM" id="MobiDB-lite"/>
    </source>
</evidence>
<evidence type="ECO:0000305" key="4"/>
<reference key="1">
    <citation type="journal article" date="2006" name="Proc. Natl. Acad. Sci. U.S.A.">
        <title>Highly conserved syntenic blocks at the vertebrate Hox loci and conserved regulatory elements within and outside Hox gene clusters.</title>
        <authorList>
            <person name="Lee A.P."/>
            <person name="Koh E.G.L."/>
            <person name="Tay A."/>
            <person name="Brenner S."/>
            <person name="Venkatesh B."/>
        </authorList>
    </citation>
    <scope>NUCLEOTIDE SEQUENCE [GENOMIC DNA]</scope>
</reference>
<protein>
    <recommendedName>
        <fullName>Homeobox protein Hox-D4a</fullName>
    </recommendedName>
</protein>
<organism>
    <name type="scientific">Takifugu rubripes</name>
    <name type="common">Japanese pufferfish</name>
    <name type="synonym">Fugu rubripes</name>
    <dbReference type="NCBI Taxonomy" id="31033"/>
    <lineage>
        <taxon>Eukaryota</taxon>
        <taxon>Metazoa</taxon>
        <taxon>Chordata</taxon>
        <taxon>Craniata</taxon>
        <taxon>Vertebrata</taxon>
        <taxon>Euteleostomi</taxon>
        <taxon>Actinopterygii</taxon>
        <taxon>Neopterygii</taxon>
        <taxon>Teleostei</taxon>
        <taxon>Neoteleostei</taxon>
        <taxon>Acanthomorphata</taxon>
        <taxon>Eupercaria</taxon>
        <taxon>Tetraodontiformes</taxon>
        <taxon>Tetradontoidea</taxon>
        <taxon>Tetraodontidae</taxon>
        <taxon>Takifugu</taxon>
    </lineage>
</organism>
<proteinExistence type="inferred from homology"/>
<comment type="function">
    <text evidence="1">Sequence-specific transcription factor which is part of a developmental regulatory system that provides cells with specific positional identities on the anterior-posterior axis.</text>
</comment>
<comment type="subcellular location">
    <subcellularLocation>
        <location evidence="2">Nucleus</location>
    </subcellularLocation>
</comment>
<comment type="similarity">
    <text evidence="4">Belongs to the Antp homeobox family. Deformed subfamily.</text>
</comment>
<accession>Q1KKS8</accession>